<feature type="chain" id="PRO_0000432118" description="Synaptonemal complex protein ZEP1">
    <location>
        <begin position="1"/>
        <end position="869"/>
    </location>
</feature>
<feature type="region of interest" description="Disordered" evidence="2">
    <location>
        <begin position="841"/>
        <end position="869"/>
    </location>
</feature>
<feature type="coiled-coil region" evidence="1">
    <location>
        <begin position="64"/>
        <end position="298"/>
    </location>
</feature>
<feature type="coiled-coil region" evidence="1">
    <location>
        <begin position="330"/>
        <end position="614"/>
    </location>
</feature>
<feature type="coiled-coil region" evidence="1">
    <location>
        <begin position="641"/>
        <end position="713"/>
    </location>
</feature>
<dbReference type="EMBL" id="GU479042">
    <property type="protein sequence ID" value="ADD69817.1"/>
    <property type="molecule type" value="mRNA"/>
</dbReference>
<dbReference type="EMBL" id="AL662937">
    <property type="protein sequence ID" value="CAE04367.1"/>
    <property type="status" value="ALT_SEQ"/>
    <property type="molecule type" value="Genomic_DNA"/>
</dbReference>
<dbReference type="EMBL" id="AP008210">
    <property type="protein sequence ID" value="BAF14866.2"/>
    <property type="status" value="ALT_SEQ"/>
    <property type="molecule type" value="Genomic_DNA"/>
</dbReference>
<dbReference type="EMBL" id="AP014960">
    <property type="protein sequence ID" value="BAS89473.1"/>
    <property type="molecule type" value="Genomic_DNA"/>
</dbReference>
<dbReference type="RefSeq" id="XP_015634514.1">
    <property type="nucleotide sequence ID" value="XM_015779028.1"/>
</dbReference>
<dbReference type="SMR" id="Q7FAD5"/>
<dbReference type="FunCoup" id="Q7FAD5">
    <property type="interactions" value="478"/>
</dbReference>
<dbReference type="STRING" id="39947.Q7FAD5"/>
<dbReference type="PaxDb" id="39947-Q7FAD5"/>
<dbReference type="EnsemblPlants" id="Os04t0452500-01">
    <property type="protein sequence ID" value="Os04t0452500-01"/>
    <property type="gene ID" value="Os04g0452500"/>
</dbReference>
<dbReference type="Gramene" id="Os04t0452500-01">
    <property type="protein sequence ID" value="Os04t0452500-01"/>
    <property type="gene ID" value="Os04g0452500"/>
</dbReference>
<dbReference type="KEGG" id="dosa:Os04g0452500"/>
<dbReference type="eggNOG" id="ENOG502QSSX">
    <property type="taxonomic scope" value="Eukaryota"/>
</dbReference>
<dbReference type="HOGENOM" id="CLU_010415_0_0_1"/>
<dbReference type="InParanoid" id="Q7FAD5"/>
<dbReference type="OMA" id="KKQYDIM"/>
<dbReference type="OrthoDB" id="783434at2759"/>
<dbReference type="Proteomes" id="UP000000763">
    <property type="component" value="Chromosome 4"/>
</dbReference>
<dbReference type="Proteomes" id="UP000059680">
    <property type="component" value="Chromosome 4"/>
</dbReference>
<dbReference type="GO" id="GO:0005694">
    <property type="term" value="C:chromosome"/>
    <property type="evidence" value="ECO:0000314"/>
    <property type="project" value="UniProtKB"/>
</dbReference>
<dbReference type="GO" id="GO:0005634">
    <property type="term" value="C:nucleus"/>
    <property type="evidence" value="ECO:0000314"/>
    <property type="project" value="UniProtKB"/>
</dbReference>
<dbReference type="GO" id="GO:0000802">
    <property type="term" value="C:transverse filament"/>
    <property type="evidence" value="ECO:0000314"/>
    <property type="project" value="UniProtKB"/>
</dbReference>
<dbReference type="GO" id="GO:0007129">
    <property type="term" value="P:homologous chromosome pairing at meiosis"/>
    <property type="evidence" value="ECO:0000315"/>
    <property type="project" value="UniProtKB"/>
</dbReference>
<dbReference type="GO" id="GO:0007131">
    <property type="term" value="P:reciprocal meiotic recombination"/>
    <property type="evidence" value="ECO:0000315"/>
    <property type="project" value="UniProtKB"/>
</dbReference>
<dbReference type="PANTHER" id="PTHR23160:SF3">
    <property type="entry name" value="SYNAPTONEMAL COMPLEX PROTEIN 1-RELATED"/>
    <property type="match status" value="1"/>
</dbReference>
<dbReference type="PANTHER" id="PTHR23160">
    <property type="entry name" value="SYNAPTONEMAL COMPLEX PROTEIN-RELATED"/>
    <property type="match status" value="1"/>
</dbReference>
<organism>
    <name type="scientific">Oryza sativa subsp. japonica</name>
    <name type="common">Rice</name>
    <dbReference type="NCBI Taxonomy" id="39947"/>
    <lineage>
        <taxon>Eukaryota</taxon>
        <taxon>Viridiplantae</taxon>
        <taxon>Streptophyta</taxon>
        <taxon>Embryophyta</taxon>
        <taxon>Tracheophyta</taxon>
        <taxon>Spermatophyta</taxon>
        <taxon>Magnoliopsida</taxon>
        <taxon>Liliopsida</taxon>
        <taxon>Poales</taxon>
        <taxon>Poaceae</taxon>
        <taxon>BOP clade</taxon>
        <taxon>Oryzoideae</taxon>
        <taxon>Oryzeae</taxon>
        <taxon>Oryzinae</taxon>
        <taxon>Oryza</taxon>
        <taxon>Oryza sativa</taxon>
    </lineage>
</organism>
<comment type="function">
    <text evidence="3">Required for chromosome synapsis and regulates crossover frequency during meiosis. Acts as a transverse filament protein and constitutes the central element of the synaptonemal complex.</text>
</comment>
<comment type="subunit">
    <text evidence="5">Interacts with CRC1.</text>
</comment>
<comment type="subcellular location">
    <subcellularLocation>
        <location evidence="3 4">Nucleus</location>
    </subcellularLocation>
    <subcellularLocation>
        <location evidence="3 4 6">Chromosome</location>
    </subcellularLocation>
    <text evidence="3 4 6">During zygotene in meiocytes, initially localizes onto the chromosomes as punctate foci and quickly extends into linear signals (PubMed:20154151, PubMed:22393242). Associates with chromosomal axes at zygotene (PubMed:27436711).</text>
</comment>
<comment type="tissue specificity">
    <text evidence="3">Highly expressed in panicles.</text>
</comment>
<comment type="disruption phenotype">
    <text evidence="3">Decreased pollen fertility due to abnormal synaptic behaviors and increased crossover formation during prophase I.</text>
</comment>
<comment type="sequence caution" evidence="7">
    <conflict type="erroneous gene model prediction">
        <sequence resource="EMBL-CDS" id="BAF14866"/>
    </conflict>
</comment>
<comment type="sequence caution" evidence="7">
    <conflict type="erroneous gene model prediction">
        <sequence resource="EMBL-CDS" id="CAE04367"/>
    </conflict>
</comment>
<keyword id="KW-0158">Chromosome</keyword>
<keyword id="KW-0175">Coiled coil</keyword>
<keyword id="KW-0469">Meiosis</keyword>
<keyword id="KW-0539">Nucleus</keyword>
<keyword id="KW-1185">Reference proteome</keyword>
<sequence>MQKLGLSGLRGLEGFRSLAGSTSTAAKAPNPKPSSDIGGSTYGSFANLKITAEKLVKEQASVKTDLEMTHTKLRRATEQINLLEAKLQQAVNENAKLKVKQTEDSKLWQGLDSKVSSTKTLCNQLTETLQQLASQTERAEEDKKFFEEILGKNSKAFEEFNCLLHDSSIKLECAEQMIISGKQEMLRIKQEKEEMDQSYKEQLYASDTTIREKNSLIKQLEDSIEQNKARLLYVDSRLECMEQELKLKEDVCICLKENLASTESEKNDLKLRNEGYTLEVQKLSKDNKELNELLSGFTVKVTELDKEHTSISSHVTQLISSFERYDGKVHEEKMLMIKSAKDKFEHLQNQYVNLISENNALQTEIEELKSRIIELQKTQEIVMVQHVEECQVAEDKIRRLESEAEISASNISQLEKVASDLEGRVQKLLEDSRSAENHKQELLQKILKLESDNQELLGRVQSVLNEKSNDTESLQGEIAKRDQQVETLENQVNQLCSIIDEKEQLHTCAVEREKNLEEQKLQVQASLAATESQLTEAKKQYDIMLEGKKIELSKHLKELSLKNDQAINEIRRKYELEKVEIINIEKEKAEKLIKEMENKCNEKISENRQDSERYLMCLKEEHGSMVARIQQDNEHKESTLRAYHKEELQRIQSQAENELRERLSSLRKDHEIQMKSLTKKHEENCQKLQDELELQKSKEEKQRALLQLQWKVMGETQQVDQEVNSKKEYSVSSIKRRDPYIRKEHQLQLVSPETKRKDVNLSGIIQSPITNMLRKVEKGTQDIPKHRKVTHHEYEVETANGRITKRRKTKSTVMFGEPNTQKSLHDTADKDPTKMKKVVAGSHPHPANIGELFSEGSLNPYAEDPYAFG</sequence>
<gene>
    <name type="primary">ZEP1</name>
    <name evidence="8" type="ordered locus">Os04g0452500</name>
    <name evidence="7" type="ordered locus">LOC_Os04g37960</name>
    <name evidence="9" type="ORF">OSJNBa0027G07.1</name>
</gene>
<name>ZEP1_ORYSJ</name>
<accession>Q7FAD5</accession>
<accession>A0A0N7KJ55</accession>
<accession>D4NYR7</accession>
<accession>Q0JCS1</accession>
<reference key="1">
    <citation type="journal article" date="2010" name="Plant Cell">
        <title>The central element protein ZEP1 of the synaptonemal complex regulates the number of crossovers during meiosis in rice.</title>
        <authorList>
            <person name="Wang M."/>
            <person name="Wang K."/>
            <person name="Tang D."/>
            <person name="Wei C."/>
            <person name="Li M."/>
            <person name="Shen Y."/>
            <person name="Chi Z."/>
            <person name="Gu M."/>
            <person name="Cheng Z."/>
        </authorList>
    </citation>
    <scope>NUCLEOTIDE SEQUENCE [MRNA]</scope>
    <scope>FUNCTION</scope>
    <scope>SUBCELLULAR LOCATION</scope>
    <scope>TISSUE SPECIFICITY</scope>
    <scope>DISRUPTION PHENOTYPE</scope>
    <source>
        <strain>cv. Nipponbare</strain>
    </source>
</reference>
<reference key="2">
    <citation type="journal article" date="2002" name="Nature">
        <title>Sequence and analysis of rice chromosome 4.</title>
        <authorList>
            <person name="Feng Q."/>
            <person name="Zhang Y."/>
            <person name="Hao P."/>
            <person name="Wang S."/>
            <person name="Fu G."/>
            <person name="Huang Y."/>
            <person name="Li Y."/>
            <person name="Zhu J."/>
            <person name="Liu Y."/>
            <person name="Hu X."/>
            <person name="Jia P."/>
            <person name="Zhang Y."/>
            <person name="Zhao Q."/>
            <person name="Ying K."/>
            <person name="Yu S."/>
            <person name="Tang Y."/>
            <person name="Weng Q."/>
            <person name="Zhang L."/>
            <person name="Lu Y."/>
            <person name="Mu J."/>
            <person name="Lu Y."/>
            <person name="Zhang L.S."/>
            <person name="Yu Z."/>
            <person name="Fan D."/>
            <person name="Liu X."/>
            <person name="Lu T."/>
            <person name="Li C."/>
            <person name="Wu Y."/>
            <person name="Sun T."/>
            <person name="Lei H."/>
            <person name="Li T."/>
            <person name="Hu H."/>
            <person name="Guan J."/>
            <person name="Wu M."/>
            <person name="Zhang R."/>
            <person name="Zhou B."/>
            <person name="Chen Z."/>
            <person name="Chen L."/>
            <person name="Jin Z."/>
            <person name="Wang R."/>
            <person name="Yin H."/>
            <person name="Cai Z."/>
            <person name="Ren S."/>
            <person name="Lv G."/>
            <person name="Gu W."/>
            <person name="Zhu G."/>
            <person name="Tu Y."/>
            <person name="Jia J."/>
            <person name="Zhang Y."/>
            <person name="Chen J."/>
            <person name="Kang H."/>
            <person name="Chen X."/>
            <person name="Shao C."/>
            <person name="Sun Y."/>
            <person name="Hu Q."/>
            <person name="Zhang X."/>
            <person name="Zhang W."/>
            <person name="Wang L."/>
            <person name="Ding C."/>
            <person name="Sheng H."/>
            <person name="Gu J."/>
            <person name="Chen S."/>
            <person name="Ni L."/>
            <person name="Zhu F."/>
            <person name="Chen W."/>
            <person name="Lan L."/>
            <person name="Lai Y."/>
            <person name="Cheng Z."/>
            <person name="Gu M."/>
            <person name="Jiang J."/>
            <person name="Li J."/>
            <person name="Hong G."/>
            <person name="Xue Y."/>
            <person name="Han B."/>
        </authorList>
    </citation>
    <scope>NUCLEOTIDE SEQUENCE [LARGE SCALE GENOMIC DNA]</scope>
    <source>
        <strain>cv. Nipponbare</strain>
    </source>
</reference>
<reference key="3">
    <citation type="journal article" date="2005" name="Nature">
        <title>The map-based sequence of the rice genome.</title>
        <authorList>
            <consortium name="International rice genome sequencing project (IRGSP)"/>
        </authorList>
    </citation>
    <scope>NUCLEOTIDE SEQUENCE [LARGE SCALE GENOMIC DNA]</scope>
    <source>
        <strain>cv. Nipponbare</strain>
    </source>
</reference>
<reference key="4">
    <citation type="journal article" date="2008" name="Nucleic Acids Res.">
        <title>The rice annotation project database (RAP-DB): 2008 update.</title>
        <authorList>
            <consortium name="The rice annotation project (RAP)"/>
        </authorList>
    </citation>
    <scope>GENOME REANNOTATION</scope>
    <source>
        <strain>cv. Nipponbare</strain>
    </source>
</reference>
<reference key="5">
    <citation type="journal article" date="2013" name="Rice">
        <title>Improvement of the Oryza sativa Nipponbare reference genome using next generation sequence and optical map data.</title>
        <authorList>
            <person name="Kawahara Y."/>
            <person name="de la Bastide M."/>
            <person name="Hamilton J.P."/>
            <person name="Kanamori H."/>
            <person name="McCombie W.R."/>
            <person name="Ouyang S."/>
            <person name="Schwartz D.C."/>
            <person name="Tanaka T."/>
            <person name="Wu J."/>
            <person name="Zhou S."/>
            <person name="Childs K.L."/>
            <person name="Davidson R.M."/>
            <person name="Lin H."/>
            <person name="Quesada-Ocampo L."/>
            <person name="Vaillancourt B."/>
            <person name="Sakai H."/>
            <person name="Lee S.S."/>
            <person name="Kim J."/>
            <person name="Numa H."/>
            <person name="Itoh T."/>
            <person name="Buell C.R."/>
            <person name="Matsumoto T."/>
        </authorList>
    </citation>
    <scope>GENOME REANNOTATION</scope>
    <source>
        <strain>cv. Nipponbare</strain>
    </source>
</reference>
<reference key="6">
    <citation type="journal article" date="2012" name="J. Cell Sci.">
        <title>ZIP4 in homologous chromosome synapsis and crossover formation in rice meiosis.</title>
        <authorList>
            <person name="Shen Y."/>
            <person name="Tang D."/>
            <person name="Wang K."/>
            <person name="Wang M."/>
            <person name="Huang J."/>
            <person name="Luo W."/>
            <person name="Luo Q."/>
            <person name="Hong L."/>
            <person name="Li M."/>
            <person name="Cheng Z."/>
        </authorList>
    </citation>
    <scope>SUBCELLULAR LOCATION</scope>
</reference>
<reference key="7">
    <citation type="journal article" date="2013" name="Plant Cell">
        <title>Central region component1, a novel synaptonemal complex component, is essential for meiotic recombination initiation in rice.</title>
        <authorList>
            <person name="Miao C."/>
            <person name="Tang D."/>
            <person name="Zhang H."/>
            <person name="Wang M."/>
            <person name="Li Y."/>
            <person name="Tang S."/>
            <person name="Yu H."/>
            <person name="Gu M."/>
            <person name="Cheng Z."/>
        </authorList>
    </citation>
    <scope>INTERACTION WITH CRC1</scope>
</reference>
<reference key="8">
    <citation type="journal article" date="2016" name="Plant Cell">
        <title>MEIOTIC F-BOX is essential for male meiotic DNA double-strand break repair in rice.</title>
        <authorList>
            <person name="He Y."/>
            <person name="Wang C."/>
            <person name="Higgins J.D."/>
            <person name="Yu J."/>
            <person name="Zong J."/>
            <person name="Lu P."/>
            <person name="Zhang D."/>
            <person name="Liang W."/>
        </authorList>
    </citation>
    <scope>SUBCELLULAR LOCATION</scope>
</reference>
<proteinExistence type="evidence at protein level"/>
<protein>
    <recommendedName>
        <fullName evidence="7">Synaptonemal complex protein ZEP1</fullName>
    </recommendedName>
</protein>
<evidence type="ECO:0000255" key="1"/>
<evidence type="ECO:0000256" key="2">
    <source>
        <dbReference type="SAM" id="MobiDB-lite"/>
    </source>
</evidence>
<evidence type="ECO:0000269" key="3">
    <source>
    </source>
</evidence>
<evidence type="ECO:0000269" key="4">
    <source>
    </source>
</evidence>
<evidence type="ECO:0000269" key="5">
    <source>
    </source>
</evidence>
<evidence type="ECO:0000269" key="6">
    <source>
    </source>
</evidence>
<evidence type="ECO:0000305" key="7"/>
<evidence type="ECO:0000312" key="8">
    <source>
        <dbReference type="EMBL" id="BAF14866.2"/>
    </source>
</evidence>
<evidence type="ECO:0000312" key="9">
    <source>
        <dbReference type="EMBL" id="CAE04367.1"/>
    </source>
</evidence>